<organism>
    <name type="scientific">Mesostigma viride</name>
    <name type="common">Green alga</name>
    <dbReference type="NCBI Taxonomy" id="41882"/>
    <lineage>
        <taxon>Eukaryota</taxon>
        <taxon>Viridiplantae</taxon>
        <taxon>Streptophyta</taxon>
        <taxon>Mesostigmatophyceae</taxon>
        <taxon>Mesostigmatales</taxon>
        <taxon>Mesostigmataceae</taxon>
        <taxon>Mesostigma</taxon>
    </lineage>
</organism>
<proteinExistence type="predicted"/>
<sequence>MNKFFSINIILWALIGLNFHILSYSLKISISNFPWQWPQEGLETYMIHTDYYLGSILFISFLGGRFASLISQLAYQIIQINIVQLIIFFSKNLHISFLLPNILNQLINLDTNRGTITEYTCIQDHIINNGWLSYFVVNLISYDLFENTLNQYNTQAIDSFFNKSVIFLIRLYIMNILFSLLTSNSLNEWIMYSIKDNFLLLPNQLIIICSVVLLVFLLQFCVY</sequence>
<geneLocation type="chloroplast"/>
<feature type="chain" id="PRO_0000217447" description="Uncharacterized 26.1 kDa protein in ndhB-psaI intergenic region">
    <location>
        <begin position="1"/>
        <end position="223"/>
    </location>
</feature>
<keyword id="KW-0150">Chloroplast</keyword>
<keyword id="KW-0934">Plastid</keyword>
<comment type="subcellular location">
    <subcellularLocation>
        <location>Plastid</location>
        <location>Chloroplast</location>
    </subcellularLocation>
</comment>
<reference key="1">
    <citation type="journal article" date="2000" name="Nature">
        <title>Ancestral chloroplast genome in Mesostigma viride reveals an early branch of green plant evolution.</title>
        <authorList>
            <person name="Lemieux C."/>
            <person name="Otis C."/>
            <person name="Turmel M."/>
        </authorList>
    </citation>
    <scope>NUCLEOTIDE SEQUENCE [LARGE SCALE GENOMIC DNA]</scope>
    <source>
        <strain>NIES-296 / KY-14 / CCMP 2046</strain>
    </source>
</reference>
<name>YCX1_MESVI</name>
<dbReference type="EMBL" id="AF166114">
    <property type="protein sequence ID" value="AAF43845.1"/>
    <property type="molecule type" value="Genomic_DNA"/>
</dbReference>
<dbReference type="RefSeq" id="NP_038405.1">
    <property type="nucleotide sequence ID" value="NC_002186.1"/>
</dbReference>
<dbReference type="SMR" id="Q9MUQ5"/>
<dbReference type="GeneID" id="1403685"/>
<dbReference type="GO" id="GO:0009507">
    <property type="term" value="C:chloroplast"/>
    <property type="evidence" value="ECO:0007669"/>
    <property type="project" value="UniProtKB-SubCell"/>
</dbReference>
<protein>
    <recommendedName>
        <fullName>Uncharacterized 26.1 kDa protein in ndhB-psaI intergenic region</fullName>
    </recommendedName>
</protein>
<accession>Q9MUQ5</accession>